<organism>
    <name type="scientific">Solibacter usitatus (strain Ellin6076)</name>
    <dbReference type="NCBI Taxonomy" id="234267"/>
    <lineage>
        <taxon>Bacteria</taxon>
        <taxon>Pseudomonadati</taxon>
        <taxon>Acidobacteriota</taxon>
        <taxon>Terriglobia</taxon>
        <taxon>Bryobacterales</taxon>
        <taxon>Solibacteraceae</taxon>
        <taxon>Candidatus Solibacter</taxon>
    </lineage>
</organism>
<name>LPXC_SOLUE</name>
<reference key="1">
    <citation type="journal article" date="2009" name="Appl. Environ. Microbiol.">
        <title>Three genomes from the phylum Acidobacteria provide insight into the lifestyles of these microorganisms in soils.</title>
        <authorList>
            <person name="Ward N.L."/>
            <person name="Challacombe J.F."/>
            <person name="Janssen P.H."/>
            <person name="Henrissat B."/>
            <person name="Coutinho P.M."/>
            <person name="Wu M."/>
            <person name="Xie G."/>
            <person name="Haft D.H."/>
            <person name="Sait M."/>
            <person name="Badger J."/>
            <person name="Barabote R.D."/>
            <person name="Bradley B."/>
            <person name="Brettin T.S."/>
            <person name="Brinkac L.M."/>
            <person name="Bruce D."/>
            <person name="Creasy T."/>
            <person name="Daugherty S.C."/>
            <person name="Davidsen T.M."/>
            <person name="DeBoy R.T."/>
            <person name="Detter J.C."/>
            <person name="Dodson R.J."/>
            <person name="Durkin A.S."/>
            <person name="Ganapathy A."/>
            <person name="Gwinn-Giglio M."/>
            <person name="Han C.S."/>
            <person name="Khouri H."/>
            <person name="Kiss H."/>
            <person name="Kothari S.P."/>
            <person name="Madupu R."/>
            <person name="Nelson K.E."/>
            <person name="Nelson W.C."/>
            <person name="Paulsen I."/>
            <person name="Penn K."/>
            <person name="Ren Q."/>
            <person name="Rosovitz M.J."/>
            <person name="Selengut J.D."/>
            <person name="Shrivastava S."/>
            <person name="Sullivan S.A."/>
            <person name="Tapia R."/>
            <person name="Thompson L.S."/>
            <person name="Watkins K.L."/>
            <person name="Yang Q."/>
            <person name="Yu C."/>
            <person name="Zafar N."/>
            <person name="Zhou L."/>
            <person name="Kuske C.R."/>
        </authorList>
    </citation>
    <scope>NUCLEOTIDE SEQUENCE [LARGE SCALE GENOMIC DNA]</scope>
    <source>
        <strain>Ellin6076</strain>
    </source>
</reference>
<dbReference type="EC" id="3.5.1.108" evidence="1"/>
<dbReference type="EMBL" id="CP000473">
    <property type="protein sequence ID" value="ABJ82147.1"/>
    <property type="molecule type" value="Genomic_DNA"/>
</dbReference>
<dbReference type="SMR" id="Q029X9"/>
<dbReference type="FunCoup" id="Q029X9">
    <property type="interactions" value="427"/>
</dbReference>
<dbReference type="STRING" id="234267.Acid_1153"/>
<dbReference type="KEGG" id="sus:Acid_1153"/>
<dbReference type="eggNOG" id="COG0774">
    <property type="taxonomic scope" value="Bacteria"/>
</dbReference>
<dbReference type="HOGENOM" id="CLU_046528_1_0_0"/>
<dbReference type="InParanoid" id="Q029X9"/>
<dbReference type="OrthoDB" id="9772788at2"/>
<dbReference type="UniPathway" id="UPA00359">
    <property type="reaction ID" value="UER00478"/>
</dbReference>
<dbReference type="GO" id="GO:0016020">
    <property type="term" value="C:membrane"/>
    <property type="evidence" value="ECO:0007669"/>
    <property type="project" value="GOC"/>
</dbReference>
<dbReference type="GO" id="GO:0046872">
    <property type="term" value="F:metal ion binding"/>
    <property type="evidence" value="ECO:0007669"/>
    <property type="project" value="UniProtKB-KW"/>
</dbReference>
<dbReference type="GO" id="GO:0103117">
    <property type="term" value="F:UDP-3-O-acyl-N-acetylglucosamine deacetylase activity"/>
    <property type="evidence" value="ECO:0007669"/>
    <property type="project" value="UniProtKB-UniRule"/>
</dbReference>
<dbReference type="GO" id="GO:0009245">
    <property type="term" value="P:lipid A biosynthetic process"/>
    <property type="evidence" value="ECO:0007669"/>
    <property type="project" value="UniProtKB-UniRule"/>
</dbReference>
<dbReference type="Gene3D" id="3.30.230.20">
    <property type="entry name" value="lpxc deacetylase, domain 1"/>
    <property type="match status" value="1"/>
</dbReference>
<dbReference type="Gene3D" id="3.30.1700.10">
    <property type="entry name" value="lpxc deacetylase, domain 2"/>
    <property type="match status" value="1"/>
</dbReference>
<dbReference type="HAMAP" id="MF_00388">
    <property type="entry name" value="LpxC"/>
    <property type="match status" value="1"/>
</dbReference>
<dbReference type="InterPro" id="IPR020568">
    <property type="entry name" value="Ribosomal_Su5_D2-typ_SF"/>
</dbReference>
<dbReference type="InterPro" id="IPR004463">
    <property type="entry name" value="UDP-acyl_GlcNac_deAcase"/>
</dbReference>
<dbReference type="InterPro" id="IPR011334">
    <property type="entry name" value="UDP-acyl_GlcNac_deAcase_C"/>
</dbReference>
<dbReference type="InterPro" id="IPR015870">
    <property type="entry name" value="UDP-acyl_N-AcGlcN_deAcase_N"/>
</dbReference>
<dbReference type="NCBIfam" id="TIGR00325">
    <property type="entry name" value="lpxC"/>
    <property type="match status" value="1"/>
</dbReference>
<dbReference type="PANTHER" id="PTHR33694">
    <property type="entry name" value="UDP-3-O-ACYL-N-ACETYLGLUCOSAMINE DEACETYLASE 1, MITOCHONDRIAL-RELATED"/>
    <property type="match status" value="1"/>
</dbReference>
<dbReference type="PANTHER" id="PTHR33694:SF1">
    <property type="entry name" value="UDP-3-O-ACYL-N-ACETYLGLUCOSAMINE DEACETYLASE 1, MITOCHONDRIAL-RELATED"/>
    <property type="match status" value="1"/>
</dbReference>
<dbReference type="Pfam" id="PF03331">
    <property type="entry name" value="LpxC"/>
    <property type="match status" value="1"/>
</dbReference>
<dbReference type="SUPFAM" id="SSF54211">
    <property type="entry name" value="Ribosomal protein S5 domain 2-like"/>
    <property type="match status" value="2"/>
</dbReference>
<comment type="function">
    <text evidence="1">Catalyzes the hydrolysis of UDP-3-O-myristoyl-N-acetylglucosamine to form UDP-3-O-myristoylglucosamine and acetate, the committed step in lipid A biosynthesis.</text>
</comment>
<comment type="catalytic activity">
    <reaction evidence="1">
        <text>a UDP-3-O-[(3R)-3-hydroxyacyl]-N-acetyl-alpha-D-glucosamine + H2O = a UDP-3-O-[(3R)-3-hydroxyacyl]-alpha-D-glucosamine + acetate</text>
        <dbReference type="Rhea" id="RHEA:67816"/>
        <dbReference type="ChEBI" id="CHEBI:15377"/>
        <dbReference type="ChEBI" id="CHEBI:30089"/>
        <dbReference type="ChEBI" id="CHEBI:137740"/>
        <dbReference type="ChEBI" id="CHEBI:173225"/>
        <dbReference type="EC" id="3.5.1.108"/>
    </reaction>
</comment>
<comment type="cofactor">
    <cofactor evidence="1">
        <name>Zn(2+)</name>
        <dbReference type="ChEBI" id="CHEBI:29105"/>
    </cofactor>
</comment>
<comment type="pathway">
    <text evidence="1">Glycolipid biosynthesis; lipid IV(A) biosynthesis; lipid IV(A) from (3R)-3-hydroxytetradecanoyl-[acyl-carrier-protein] and UDP-N-acetyl-alpha-D-glucosamine: step 2/6.</text>
</comment>
<comment type="similarity">
    <text evidence="1">Belongs to the LpxC family.</text>
</comment>
<evidence type="ECO:0000255" key="1">
    <source>
        <dbReference type="HAMAP-Rule" id="MF_00388"/>
    </source>
</evidence>
<feature type="chain" id="PRO_1000122824" description="UDP-3-O-acyl-N-acetylglucosamine deacetylase">
    <location>
        <begin position="1"/>
        <end position="295"/>
    </location>
</feature>
<feature type="active site" description="Proton donor" evidence="1">
    <location>
        <position position="260"/>
    </location>
</feature>
<feature type="binding site" evidence="1">
    <location>
        <position position="77"/>
    </location>
    <ligand>
        <name>Zn(2+)</name>
        <dbReference type="ChEBI" id="CHEBI:29105"/>
    </ligand>
</feature>
<feature type="binding site" evidence="1">
    <location>
        <position position="233"/>
    </location>
    <ligand>
        <name>Zn(2+)</name>
        <dbReference type="ChEBI" id="CHEBI:29105"/>
    </ligand>
</feature>
<feature type="binding site" evidence="1">
    <location>
        <position position="237"/>
    </location>
    <ligand>
        <name>Zn(2+)</name>
        <dbReference type="ChEBI" id="CHEBI:29105"/>
    </ligand>
</feature>
<proteinExistence type="inferred from homology"/>
<sequence>MRFETTVQRPVEASGVGLHSGVPVKIRILPAPVSTGVVFVRTDLDGFQIPASWRHVARVSYATSLMRQGVLISTTEHLLSVFYSMGIDNVYVEIDNLEVPILDGSGLPFVKLIAQAGIRQYRRKRRYLRIRRPISVEDKGKRISILPDEAFRLTCDTEYPAPVGRQSLELVVTPEHYASELAFARTFGWENDLDQMRNMGLIRGASLANAVCFTSEGPLNPDGLRAVDECCRHKALDLIGDLALLGRPLLGHVIAERAGHAMHAALVARIMGDPSIYEIITFDQLASRVTQALVS</sequence>
<protein>
    <recommendedName>
        <fullName evidence="1">UDP-3-O-acyl-N-acetylglucosamine deacetylase</fullName>
        <shortName evidence="1">UDP-3-O-acyl-GlcNAc deacetylase</shortName>
        <ecNumber evidence="1">3.5.1.108</ecNumber>
    </recommendedName>
    <alternativeName>
        <fullName evidence="1">UDP-3-O-[R-3-hydroxymyristoyl]-N-acetylglucosamine deacetylase</fullName>
    </alternativeName>
</protein>
<gene>
    <name evidence="1" type="primary">lpxC</name>
    <name type="ordered locus">Acid_1153</name>
</gene>
<accession>Q029X9</accession>
<keyword id="KW-0378">Hydrolase</keyword>
<keyword id="KW-0441">Lipid A biosynthesis</keyword>
<keyword id="KW-0444">Lipid biosynthesis</keyword>
<keyword id="KW-0443">Lipid metabolism</keyword>
<keyword id="KW-0479">Metal-binding</keyword>
<keyword id="KW-0862">Zinc</keyword>